<comment type="function">
    <text>Stimulates the secretion of gonadotropins.</text>
</comment>
<comment type="subcellular location">
    <subcellularLocation>
        <location>Secreted</location>
    </subcellularLocation>
</comment>
<comment type="tissue specificity">
    <text evidence="2">Olfactory bulbs, hypothalamus and telencephalon, midbrain and posterior brain areas.</text>
</comment>
<comment type="similarity">
    <text evidence="3">Belongs to the GnRH family.</text>
</comment>
<gene>
    <name type="primary">gnrh2b</name>
</gene>
<proteinExistence type="evidence at transcript level"/>
<feature type="signal peptide" evidence="1">
    <location>
        <begin position="1"/>
        <end position="24"/>
    </location>
</feature>
<feature type="chain" id="PRO_0000012471" description="Progonadoliberin IIB">
    <location>
        <begin position="25"/>
        <end position="86"/>
    </location>
</feature>
<feature type="peptide" id="PRO_0000012472" description="Gonadoliberin II">
    <location>
        <begin position="25"/>
        <end position="34"/>
    </location>
</feature>
<feature type="peptide" id="PRO_0000012473" description="GnRH-associated peptide IIB">
    <location>
        <begin position="38"/>
        <end position="86"/>
    </location>
</feature>
<feature type="modified residue" description="Pyrrolidone carboxylic acid" evidence="1">
    <location>
        <position position="25"/>
    </location>
</feature>
<feature type="modified residue" description="Glycine amide" evidence="1">
    <location>
        <position position="34"/>
    </location>
</feature>
<organism>
    <name type="scientific">Carassius auratus</name>
    <name type="common">Goldfish</name>
    <dbReference type="NCBI Taxonomy" id="7957"/>
    <lineage>
        <taxon>Eukaryota</taxon>
        <taxon>Metazoa</taxon>
        <taxon>Chordata</taxon>
        <taxon>Craniata</taxon>
        <taxon>Vertebrata</taxon>
        <taxon>Euteleostomi</taxon>
        <taxon>Actinopterygii</taxon>
        <taxon>Neopterygii</taxon>
        <taxon>Teleostei</taxon>
        <taxon>Ostariophysi</taxon>
        <taxon>Cypriniformes</taxon>
        <taxon>Cyprinidae</taxon>
        <taxon>Cyprininae</taxon>
        <taxon>Carassius</taxon>
    </lineage>
</organism>
<accession>O42471</accession>
<sequence length="86" mass="9917">MVHICRLFVVMGMLMFLSVQFASSQHWSHGWYPGGKREIDVYDPSEVSEEIKLCNAGKCSFLIPQGRNILKTILLDALTRDFQKRK</sequence>
<protein>
    <recommendedName>
        <fullName>Progonadoliberin IIB</fullName>
    </recommendedName>
    <component>
        <recommendedName>
            <fullName>Gonadoliberin II</fullName>
        </recommendedName>
        <alternativeName>
            <fullName>Gonadotropin-releasing hormone II</fullName>
            <shortName>GnRH II</shortName>
        </alternativeName>
        <alternativeName>
            <fullName>Luliberin II</fullName>
        </alternativeName>
        <alternativeName>
            <fullName>Luteinizing hormone-releasing hormone II</fullName>
            <shortName>LH-RH II</shortName>
        </alternativeName>
    </component>
    <component>
        <recommendedName>
            <fullName>GnRH-associated peptide IIB</fullName>
        </recommendedName>
    </component>
</protein>
<name>GON2B_CARAU</name>
<keyword id="KW-0027">Amidation</keyword>
<keyword id="KW-0165">Cleavage on pair of basic residues</keyword>
<keyword id="KW-0372">Hormone</keyword>
<keyword id="KW-0873">Pyrrolidone carboxylic acid</keyword>
<keyword id="KW-1185">Reference proteome</keyword>
<keyword id="KW-0964">Secreted</keyword>
<keyword id="KW-0732">Signal</keyword>
<evidence type="ECO:0000250" key="1"/>
<evidence type="ECO:0000269" key="2">
    <source>
    </source>
</evidence>
<evidence type="ECO:0000305" key="3"/>
<reference key="1">
    <citation type="journal article" date="1997" name="Gen. Comp. Endocrinol.">
        <title>Cloning and expression pattern of a second [His5Trp7Tyr8]gonadotropin-releasing hormone (chicken GnRH-H-II) mRNA in goldfish: evidence for two distinct genes.</title>
        <authorList>
            <person name="Lin X.-W."/>
            <person name="Peter R.E."/>
        </authorList>
    </citation>
    <scope>NUCLEOTIDE SEQUENCE [GENOMIC DNA / MRNA]</scope>
    <scope>TISSUE SPECIFICITY</scope>
    <source>
        <strain>Comet</strain>
        <strain>Common</strain>
        <tissue>Liver</tissue>
    </source>
</reference>
<dbReference type="EMBL" id="U40567">
    <property type="protein sequence ID" value="AAB86989.1"/>
    <property type="molecule type" value="mRNA"/>
</dbReference>
<dbReference type="EMBL" id="U40665">
    <property type="protein sequence ID" value="AAB86990.1"/>
    <property type="molecule type" value="Genomic_DNA"/>
</dbReference>
<dbReference type="OrthoDB" id="8490433at2759"/>
<dbReference type="Proteomes" id="UP000515129">
    <property type="component" value="Unplaced"/>
</dbReference>
<dbReference type="GO" id="GO:0005615">
    <property type="term" value="C:extracellular space"/>
    <property type="evidence" value="ECO:0000250"/>
    <property type="project" value="UniProtKB"/>
</dbReference>
<dbReference type="GO" id="GO:0005183">
    <property type="term" value="F:gonadotropin hormone-releasing hormone activity"/>
    <property type="evidence" value="ECO:0007669"/>
    <property type="project" value="TreeGrafter"/>
</dbReference>
<dbReference type="GO" id="GO:0031530">
    <property type="term" value="F:gonadotropin-releasing hormone receptor binding"/>
    <property type="evidence" value="ECO:0007669"/>
    <property type="project" value="TreeGrafter"/>
</dbReference>
<dbReference type="InterPro" id="IPR002012">
    <property type="entry name" value="GnRH"/>
</dbReference>
<dbReference type="InterPro" id="IPR019792">
    <property type="entry name" value="Gonadoliberin"/>
</dbReference>
<dbReference type="PANTHER" id="PTHR10522">
    <property type="entry name" value="GONADOLIBERIN"/>
    <property type="match status" value="1"/>
</dbReference>
<dbReference type="PANTHER" id="PTHR10522:SF8">
    <property type="entry name" value="PROGONADOLIBERIN"/>
    <property type="match status" value="1"/>
</dbReference>
<dbReference type="Pfam" id="PF00446">
    <property type="entry name" value="GnRH"/>
    <property type="match status" value="1"/>
</dbReference>
<dbReference type="PROSITE" id="PS00473">
    <property type="entry name" value="GNRH"/>
    <property type="match status" value="1"/>
</dbReference>